<name>RS7_MYCA9</name>
<accession>B1MGH9</accession>
<sequence length="156" mass="17507">MPRKGPAPSRPLVNDPVYGSQLVTQLVNKVLLDGKKSIAERIVYGALEQARDKTGTDPVVTLKRAMDNVKPALEVRSRRVGGATYQVPVEVRPDRSTTLALRWLVTFSRARREKTMVERLANEILDASNGLGASVKRREDTHKMAEANRAFAHYRW</sequence>
<organism>
    <name type="scientific">Mycobacteroides abscessus (strain ATCC 19977 / DSM 44196 / CCUG 20993 / CIP 104536 / JCM 13569 / NCTC 13031 / TMC 1543 / L948)</name>
    <name type="common">Mycobacterium abscessus</name>
    <dbReference type="NCBI Taxonomy" id="561007"/>
    <lineage>
        <taxon>Bacteria</taxon>
        <taxon>Bacillati</taxon>
        <taxon>Actinomycetota</taxon>
        <taxon>Actinomycetes</taxon>
        <taxon>Mycobacteriales</taxon>
        <taxon>Mycobacteriaceae</taxon>
        <taxon>Mycobacteroides</taxon>
        <taxon>Mycobacteroides abscessus</taxon>
    </lineage>
</organism>
<proteinExistence type="inferred from homology"/>
<keyword id="KW-1185">Reference proteome</keyword>
<keyword id="KW-0687">Ribonucleoprotein</keyword>
<keyword id="KW-0689">Ribosomal protein</keyword>
<keyword id="KW-0694">RNA-binding</keyword>
<keyword id="KW-0699">rRNA-binding</keyword>
<keyword id="KW-0820">tRNA-binding</keyword>
<comment type="function">
    <text evidence="1">One of the primary rRNA binding proteins, it binds directly to 16S rRNA where it nucleates assembly of the head domain of the 30S subunit. Is located at the subunit interface close to the decoding center, probably blocks exit of the E-site tRNA.</text>
</comment>
<comment type="subunit">
    <text evidence="1">Part of the 30S ribosomal subunit. Contacts proteins S9 and S11.</text>
</comment>
<comment type="similarity">
    <text evidence="1">Belongs to the universal ribosomal protein uS7 family.</text>
</comment>
<reference key="1">
    <citation type="journal article" date="2009" name="PLoS ONE">
        <title>Non mycobacterial virulence genes in the genome of the emerging pathogen Mycobacterium abscessus.</title>
        <authorList>
            <person name="Ripoll F."/>
            <person name="Pasek S."/>
            <person name="Schenowitz C."/>
            <person name="Dossat C."/>
            <person name="Barbe V."/>
            <person name="Rottman M."/>
            <person name="Macheras E."/>
            <person name="Heym B."/>
            <person name="Herrmann J.L."/>
            <person name="Daffe M."/>
            <person name="Brosch R."/>
            <person name="Risler J.L."/>
            <person name="Gaillard J.L."/>
        </authorList>
    </citation>
    <scope>NUCLEOTIDE SEQUENCE [LARGE SCALE GENOMIC DNA]</scope>
    <source>
        <strain>ATCC 19977 / DSM 44196 / CCUG 20993 / CIP 104536 / JCM 13569 / NCTC 13031 / TMC 1543 / L948</strain>
    </source>
</reference>
<gene>
    <name evidence="1" type="primary">rpsG</name>
    <name type="ordered locus">MAB_3850c</name>
</gene>
<feature type="chain" id="PRO_1000125971" description="Small ribosomal subunit protein uS7">
    <location>
        <begin position="1"/>
        <end position="156"/>
    </location>
</feature>
<dbReference type="EMBL" id="CU458896">
    <property type="protein sequence ID" value="CAM63924.1"/>
    <property type="molecule type" value="Genomic_DNA"/>
</dbReference>
<dbReference type="RefSeq" id="WP_005055588.1">
    <property type="nucleotide sequence ID" value="NZ_MLCG01000001.1"/>
</dbReference>
<dbReference type="SMR" id="B1MGH9"/>
<dbReference type="GeneID" id="93380788"/>
<dbReference type="KEGG" id="mab:MAB_3850c"/>
<dbReference type="Proteomes" id="UP000007137">
    <property type="component" value="Chromosome"/>
</dbReference>
<dbReference type="GO" id="GO:0015935">
    <property type="term" value="C:small ribosomal subunit"/>
    <property type="evidence" value="ECO:0007669"/>
    <property type="project" value="InterPro"/>
</dbReference>
<dbReference type="GO" id="GO:0019843">
    <property type="term" value="F:rRNA binding"/>
    <property type="evidence" value="ECO:0007669"/>
    <property type="project" value="UniProtKB-UniRule"/>
</dbReference>
<dbReference type="GO" id="GO:0003735">
    <property type="term" value="F:structural constituent of ribosome"/>
    <property type="evidence" value="ECO:0007669"/>
    <property type="project" value="InterPro"/>
</dbReference>
<dbReference type="GO" id="GO:0000049">
    <property type="term" value="F:tRNA binding"/>
    <property type="evidence" value="ECO:0007669"/>
    <property type="project" value="UniProtKB-UniRule"/>
</dbReference>
<dbReference type="GO" id="GO:0006412">
    <property type="term" value="P:translation"/>
    <property type="evidence" value="ECO:0007669"/>
    <property type="project" value="UniProtKB-UniRule"/>
</dbReference>
<dbReference type="CDD" id="cd14869">
    <property type="entry name" value="uS7_Bacteria"/>
    <property type="match status" value="1"/>
</dbReference>
<dbReference type="FunFam" id="1.10.455.10:FF:000001">
    <property type="entry name" value="30S ribosomal protein S7"/>
    <property type="match status" value="1"/>
</dbReference>
<dbReference type="Gene3D" id="1.10.455.10">
    <property type="entry name" value="Ribosomal protein S7 domain"/>
    <property type="match status" value="1"/>
</dbReference>
<dbReference type="HAMAP" id="MF_00480_B">
    <property type="entry name" value="Ribosomal_uS7_B"/>
    <property type="match status" value="1"/>
</dbReference>
<dbReference type="InterPro" id="IPR000235">
    <property type="entry name" value="Ribosomal_uS7"/>
</dbReference>
<dbReference type="InterPro" id="IPR005717">
    <property type="entry name" value="Ribosomal_uS7_bac/org-type"/>
</dbReference>
<dbReference type="InterPro" id="IPR020606">
    <property type="entry name" value="Ribosomal_uS7_CS"/>
</dbReference>
<dbReference type="InterPro" id="IPR023798">
    <property type="entry name" value="Ribosomal_uS7_dom"/>
</dbReference>
<dbReference type="InterPro" id="IPR036823">
    <property type="entry name" value="Ribosomal_uS7_dom_sf"/>
</dbReference>
<dbReference type="NCBIfam" id="TIGR01029">
    <property type="entry name" value="rpsG_bact"/>
    <property type="match status" value="1"/>
</dbReference>
<dbReference type="PANTHER" id="PTHR11205">
    <property type="entry name" value="RIBOSOMAL PROTEIN S7"/>
    <property type="match status" value="1"/>
</dbReference>
<dbReference type="Pfam" id="PF00177">
    <property type="entry name" value="Ribosomal_S7"/>
    <property type="match status" value="1"/>
</dbReference>
<dbReference type="PIRSF" id="PIRSF002122">
    <property type="entry name" value="RPS7p_RPS7a_RPS5e_RPS7o"/>
    <property type="match status" value="1"/>
</dbReference>
<dbReference type="SUPFAM" id="SSF47973">
    <property type="entry name" value="Ribosomal protein S7"/>
    <property type="match status" value="1"/>
</dbReference>
<dbReference type="PROSITE" id="PS00052">
    <property type="entry name" value="RIBOSOMAL_S7"/>
    <property type="match status" value="1"/>
</dbReference>
<protein>
    <recommendedName>
        <fullName evidence="1">Small ribosomal subunit protein uS7</fullName>
    </recommendedName>
    <alternativeName>
        <fullName evidence="2">30S ribosomal protein S7</fullName>
    </alternativeName>
</protein>
<evidence type="ECO:0000255" key="1">
    <source>
        <dbReference type="HAMAP-Rule" id="MF_00480"/>
    </source>
</evidence>
<evidence type="ECO:0000305" key="2"/>